<evidence type="ECO:0000255" key="1">
    <source>
        <dbReference type="HAMAP-Rule" id="MF_00530"/>
    </source>
</evidence>
<accession>A3QJQ9</accession>
<dbReference type="EMBL" id="CP000606">
    <property type="protein sequence ID" value="ABO25707.1"/>
    <property type="molecule type" value="Genomic_DNA"/>
</dbReference>
<dbReference type="RefSeq" id="WP_011867635.1">
    <property type="nucleotide sequence ID" value="NC_009092.1"/>
</dbReference>
<dbReference type="SMR" id="A3QJQ9"/>
<dbReference type="STRING" id="323850.Shew_3844"/>
<dbReference type="KEGG" id="slo:Shew_3844"/>
<dbReference type="eggNOG" id="COG0355">
    <property type="taxonomic scope" value="Bacteria"/>
</dbReference>
<dbReference type="HOGENOM" id="CLU_084338_2_0_6"/>
<dbReference type="OrthoDB" id="9791445at2"/>
<dbReference type="Proteomes" id="UP000001558">
    <property type="component" value="Chromosome"/>
</dbReference>
<dbReference type="GO" id="GO:0005886">
    <property type="term" value="C:plasma membrane"/>
    <property type="evidence" value="ECO:0007669"/>
    <property type="project" value="UniProtKB-SubCell"/>
</dbReference>
<dbReference type="GO" id="GO:0045259">
    <property type="term" value="C:proton-transporting ATP synthase complex"/>
    <property type="evidence" value="ECO:0007669"/>
    <property type="project" value="UniProtKB-KW"/>
</dbReference>
<dbReference type="GO" id="GO:0005524">
    <property type="term" value="F:ATP binding"/>
    <property type="evidence" value="ECO:0007669"/>
    <property type="project" value="UniProtKB-UniRule"/>
</dbReference>
<dbReference type="GO" id="GO:0046933">
    <property type="term" value="F:proton-transporting ATP synthase activity, rotational mechanism"/>
    <property type="evidence" value="ECO:0007669"/>
    <property type="project" value="UniProtKB-UniRule"/>
</dbReference>
<dbReference type="CDD" id="cd12152">
    <property type="entry name" value="F1-ATPase_delta"/>
    <property type="match status" value="1"/>
</dbReference>
<dbReference type="FunFam" id="1.20.5.440:FF:000001">
    <property type="entry name" value="ATP synthase epsilon chain"/>
    <property type="match status" value="1"/>
</dbReference>
<dbReference type="FunFam" id="2.60.15.10:FF:000001">
    <property type="entry name" value="ATP synthase epsilon chain"/>
    <property type="match status" value="1"/>
</dbReference>
<dbReference type="Gene3D" id="1.20.5.440">
    <property type="entry name" value="ATP synthase delta/epsilon subunit, C-terminal domain"/>
    <property type="match status" value="1"/>
</dbReference>
<dbReference type="Gene3D" id="2.60.15.10">
    <property type="entry name" value="F0F1 ATP synthase delta/epsilon subunit, N-terminal"/>
    <property type="match status" value="1"/>
</dbReference>
<dbReference type="HAMAP" id="MF_00530">
    <property type="entry name" value="ATP_synth_epsil_bac"/>
    <property type="match status" value="1"/>
</dbReference>
<dbReference type="InterPro" id="IPR036794">
    <property type="entry name" value="ATP_F1_dsu/esu_C_sf"/>
</dbReference>
<dbReference type="InterPro" id="IPR001469">
    <property type="entry name" value="ATP_synth_F1_dsu/esu"/>
</dbReference>
<dbReference type="InterPro" id="IPR020546">
    <property type="entry name" value="ATP_synth_F1_dsu/esu_N"/>
</dbReference>
<dbReference type="InterPro" id="IPR020547">
    <property type="entry name" value="ATP_synth_F1_esu_C"/>
</dbReference>
<dbReference type="InterPro" id="IPR036771">
    <property type="entry name" value="ATPsynth_dsu/esu_N"/>
</dbReference>
<dbReference type="NCBIfam" id="TIGR01216">
    <property type="entry name" value="ATP_synt_epsi"/>
    <property type="match status" value="1"/>
</dbReference>
<dbReference type="NCBIfam" id="NF001847">
    <property type="entry name" value="PRK00571.1-4"/>
    <property type="match status" value="1"/>
</dbReference>
<dbReference type="PANTHER" id="PTHR13822">
    <property type="entry name" value="ATP SYNTHASE DELTA/EPSILON CHAIN"/>
    <property type="match status" value="1"/>
</dbReference>
<dbReference type="PANTHER" id="PTHR13822:SF10">
    <property type="entry name" value="ATP SYNTHASE EPSILON CHAIN, CHLOROPLASTIC"/>
    <property type="match status" value="1"/>
</dbReference>
<dbReference type="Pfam" id="PF00401">
    <property type="entry name" value="ATP-synt_DE"/>
    <property type="match status" value="1"/>
</dbReference>
<dbReference type="Pfam" id="PF02823">
    <property type="entry name" value="ATP-synt_DE_N"/>
    <property type="match status" value="1"/>
</dbReference>
<dbReference type="SUPFAM" id="SSF46604">
    <property type="entry name" value="Epsilon subunit of F1F0-ATP synthase C-terminal domain"/>
    <property type="match status" value="1"/>
</dbReference>
<dbReference type="SUPFAM" id="SSF51344">
    <property type="entry name" value="Epsilon subunit of F1F0-ATP synthase N-terminal domain"/>
    <property type="match status" value="1"/>
</dbReference>
<name>ATPE_SHELP</name>
<proteinExistence type="inferred from homology"/>
<comment type="function">
    <text evidence="1">Produces ATP from ADP in the presence of a proton gradient across the membrane.</text>
</comment>
<comment type="subunit">
    <text evidence="1">F-type ATPases have 2 components, CF(1) - the catalytic core - and CF(0) - the membrane proton channel. CF(1) has five subunits: alpha(3), beta(3), gamma(1), delta(1), epsilon(1). CF(0) has three main subunits: a, b and c.</text>
</comment>
<comment type="subcellular location">
    <subcellularLocation>
        <location evidence="1">Cell inner membrane</location>
        <topology evidence="1">Peripheral membrane protein</topology>
    </subcellularLocation>
</comment>
<comment type="similarity">
    <text evidence="1">Belongs to the ATPase epsilon chain family.</text>
</comment>
<gene>
    <name evidence="1" type="primary">atpC</name>
    <name type="ordered locus">Shew_3844</name>
</gene>
<reference key="1">
    <citation type="submission" date="2007-03" db="EMBL/GenBank/DDBJ databases">
        <title>Complete sequence of Shewanella loihica PV-4.</title>
        <authorList>
            <consortium name="US DOE Joint Genome Institute"/>
            <person name="Copeland A."/>
            <person name="Lucas S."/>
            <person name="Lapidus A."/>
            <person name="Barry K."/>
            <person name="Detter J.C."/>
            <person name="Glavina del Rio T."/>
            <person name="Hammon N."/>
            <person name="Israni S."/>
            <person name="Dalin E."/>
            <person name="Tice H."/>
            <person name="Pitluck S."/>
            <person name="Chain P."/>
            <person name="Malfatti S."/>
            <person name="Shin M."/>
            <person name="Vergez L."/>
            <person name="Schmutz J."/>
            <person name="Larimer F."/>
            <person name="Land M."/>
            <person name="Hauser L."/>
            <person name="Kyrpides N."/>
            <person name="Mikhailova N."/>
            <person name="Romine M.F."/>
            <person name="Serres G."/>
            <person name="Fredrickson J."/>
            <person name="Tiedje J."/>
            <person name="Richardson P."/>
        </authorList>
    </citation>
    <scope>NUCLEOTIDE SEQUENCE [LARGE SCALE GENOMIC DNA]</scope>
    <source>
        <strain>ATCC BAA-1088 / PV-4</strain>
    </source>
</reference>
<protein>
    <recommendedName>
        <fullName evidence="1">ATP synthase epsilon chain</fullName>
    </recommendedName>
    <alternativeName>
        <fullName evidence="1">ATP synthase F1 sector epsilon subunit</fullName>
    </alternativeName>
    <alternativeName>
        <fullName evidence="1">F-ATPase epsilon subunit</fullName>
    </alternativeName>
</protein>
<organism>
    <name type="scientific">Shewanella loihica (strain ATCC BAA-1088 / PV-4)</name>
    <dbReference type="NCBI Taxonomy" id="323850"/>
    <lineage>
        <taxon>Bacteria</taxon>
        <taxon>Pseudomonadati</taxon>
        <taxon>Pseudomonadota</taxon>
        <taxon>Gammaproteobacteria</taxon>
        <taxon>Alteromonadales</taxon>
        <taxon>Shewanellaceae</taxon>
        <taxon>Shewanella</taxon>
    </lineage>
</organism>
<sequence length="142" mass="15035">MAAMTVQLDIVSAESSIFSGLVAHLQVSGAEGDLGVMPGHAPLLTHIKPGMARIVKQDGKEEVFYLSGGILEVQPFSVSVLADVVLRAEEIDEQAAVEAKRRAEAHMANAGADFNYAAAAIELAQAIAQLRVVETIKKNIAR</sequence>
<keyword id="KW-0066">ATP synthesis</keyword>
<keyword id="KW-0997">Cell inner membrane</keyword>
<keyword id="KW-1003">Cell membrane</keyword>
<keyword id="KW-0139">CF(1)</keyword>
<keyword id="KW-0375">Hydrogen ion transport</keyword>
<keyword id="KW-0406">Ion transport</keyword>
<keyword id="KW-0472">Membrane</keyword>
<keyword id="KW-1185">Reference proteome</keyword>
<keyword id="KW-0813">Transport</keyword>
<feature type="chain" id="PRO_1000081746" description="ATP synthase epsilon chain">
    <location>
        <begin position="1"/>
        <end position="142"/>
    </location>
</feature>